<feature type="chain" id="PRO_0000126426" description="Small ribosomal subunit protein uS8">
    <location>
        <begin position="1"/>
        <end position="132"/>
    </location>
</feature>
<accession>Q6AD08</accession>
<gene>
    <name evidence="1" type="primary">rpsH</name>
    <name type="ordered locus">Lxx20200</name>
</gene>
<dbReference type="EMBL" id="AE016822">
    <property type="protein sequence ID" value="AAT89736.1"/>
    <property type="molecule type" value="Genomic_DNA"/>
</dbReference>
<dbReference type="RefSeq" id="WP_011186722.1">
    <property type="nucleotide sequence ID" value="NC_006087.1"/>
</dbReference>
<dbReference type="SMR" id="Q6AD08"/>
<dbReference type="STRING" id="281090.Lxx20200"/>
<dbReference type="KEGG" id="lxx:Lxx20200"/>
<dbReference type="eggNOG" id="COG0096">
    <property type="taxonomic scope" value="Bacteria"/>
</dbReference>
<dbReference type="HOGENOM" id="CLU_098428_0_1_11"/>
<dbReference type="Proteomes" id="UP000001306">
    <property type="component" value="Chromosome"/>
</dbReference>
<dbReference type="GO" id="GO:1990904">
    <property type="term" value="C:ribonucleoprotein complex"/>
    <property type="evidence" value="ECO:0007669"/>
    <property type="project" value="UniProtKB-KW"/>
</dbReference>
<dbReference type="GO" id="GO:0005840">
    <property type="term" value="C:ribosome"/>
    <property type="evidence" value="ECO:0007669"/>
    <property type="project" value="UniProtKB-KW"/>
</dbReference>
<dbReference type="GO" id="GO:0019843">
    <property type="term" value="F:rRNA binding"/>
    <property type="evidence" value="ECO:0007669"/>
    <property type="project" value="UniProtKB-UniRule"/>
</dbReference>
<dbReference type="GO" id="GO:0003735">
    <property type="term" value="F:structural constituent of ribosome"/>
    <property type="evidence" value="ECO:0007669"/>
    <property type="project" value="InterPro"/>
</dbReference>
<dbReference type="GO" id="GO:0006412">
    <property type="term" value="P:translation"/>
    <property type="evidence" value="ECO:0007669"/>
    <property type="project" value="UniProtKB-UniRule"/>
</dbReference>
<dbReference type="FunFam" id="3.30.1370.30:FF:000002">
    <property type="entry name" value="30S ribosomal protein S8"/>
    <property type="match status" value="1"/>
</dbReference>
<dbReference type="FunFam" id="3.30.1490.10:FF:000001">
    <property type="entry name" value="30S ribosomal protein S8"/>
    <property type="match status" value="1"/>
</dbReference>
<dbReference type="Gene3D" id="3.30.1370.30">
    <property type="match status" value="1"/>
</dbReference>
<dbReference type="Gene3D" id="3.30.1490.10">
    <property type="match status" value="1"/>
</dbReference>
<dbReference type="HAMAP" id="MF_01302_B">
    <property type="entry name" value="Ribosomal_uS8_B"/>
    <property type="match status" value="1"/>
</dbReference>
<dbReference type="InterPro" id="IPR000630">
    <property type="entry name" value="Ribosomal_uS8"/>
</dbReference>
<dbReference type="InterPro" id="IPR035987">
    <property type="entry name" value="Ribosomal_uS8_sf"/>
</dbReference>
<dbReference type="NCBIfam" id="NF001109">
    <property type="entry name" value="PRK00136.1"/>
    <property type="match status" value="1"/>
</dbReference>
<dbReference type="PANTHER" id="PTHR11758">
    <property type="entry name" value="40S RIBOSOMAL PROTEIN S15A"/>
    <property type="match status" value="1"/>
</dbReference>
<dbReference type="Pfam" id="PF00410">
    <property type="entry name" value="Ribosomal_S8"/>
    <property type="match status" value="1"/>
</dbReference>
<dbReference type="SUPFAM" id="SSF56047">
    <property type="entry name" value="Ribosomal protein S8"/>
    <property type="match status" value="1"/>
</dbReference>
<proteinExistence type="inferred from homology"/>
<name>RS8_LEIXX</name>
<sequence>MTMTDPVADMLTRLRNANSAHHDTVSMPHSKLKVHIAEILTTEGYISGWEVADARVGQTLTLSLKFGPNRERSIAGIKRVSKPGLRVYAKSTELPKVLGGLGVAILSTSSGLLTDRQAEKKGVGGEVLAYVW</sequence>
<comment type="function">
    <text evidence="1">One of the primary rRNA binding proteins, it binds directly to 16S rRNA central domain where it helps coordinate assembly of the platform of the 30S subunit.</text>
</comment>
<comment type="subunit">
    <text evidence="1">Part of the 30S ribosomal subunit. Contacts proteins S5 and S12.</text>
</comment>
<comment type="similarity">
    <text evidence="1">Belongs to the universal ribosomal protein uS8 family.</text>
</comment>
<organism>
    <name type="scientific">Leifsonia xyli subsp. xyli (strain CTCB07)</name>
    <dbReference type="NCBI Taxonomy" id="281090"/>
    <lineage>
        <taxon>Bacteria</taxon>
        <taxon>Bacillati</taxon>
        <taxon>Actinomycetota</taxon>
        <taxon>Actinomycetes</taxon>
        <taxon>Micrococcales</taxon>
        <taxon>Microbacteriaceae</taxon>
        <taxon>Leifsonia</taxon>
    </lineage>
</organism>
<keyword id="KW-1185">Reference proteome</keyword>
<keyword id="KW-0687">Ribonucleoprotein</keyword>
<keyword id="KW-0689">Ribosomal protein</keyword>
<keyword id="KW-0694">RNA-binding</keyword>
<keyword id="KW-0699">rRNA-binding</keyword>
<protein>
    <recommendedName>
        <fullName evidence="1">Small ribosomal subunit protein uS8</fullName>
    </recommendedName>
    <alternativeName>
        <fullName evidence="2">30S ribosomal protein S8</fullName>
    </alternativeName>
</protein>
<evidence type="ECO:0000255" key="1">
    <source>
        <dbReference type="HAMAP-Rule" id="MF_01302"/>
    </source>
</evidence>
<evidence type="ECO:0000305" key="2"/>
<reference key="1">
    <citation type="journal article" date="2004" name="Mol. Plant Microbe Interact.">
        <title>The genome sequence of the Gram-positive sugarcane pathogen Leifsonia xyli subsp. xyli.</title>
        <authorList>
            <person name="Monteiro-Vitorello C.B."/>
            <person name="Camargo L.E.A."/>
            <person name="Van Sluys M.A."/>
            <person name="Kitajima J.P."/>
            <person name="Truffi D."/>
            <person name="do Amaral A.M."/>
            <person name="Harakava R."/>
            <person name="de Oliveira J.C.F."/>
            <person name="Wood D."/>
            <person name="de Oliveira M.C."/>
            <person name="Miyaki C.Y."/>
            <person name="Takita M.A."/>
            <person name="da Silva A.C.R."/>
            <person name="Furlan L.R."/>
            <person name="Carraro D.M."/>
            <person name="Camarotte G."/>
            <person name="Almeida N.F. Jr."/>
            <person name="Carrer H."/>
            <person name="Coutinho L.L."/>
            <person name="El-Dorry H.A."/>
            <person name="Ferro M.I.T."/>
            <person name="Gagliardi P.R."/>
            <person name="Giglioti E."/>
            <person name="Goldman M.H.S."/>
            <person name="Goldman G.H."/>
            <person name="Kimura E.T."/>
            <person name="Ferro E.S."/>
            <person name="Kuramae E.E."/>
            <person name="Lemos E.G.M."/>
            <person name="Lemos M.V.F."/>
            <person name="Mauro S.M.Z."/>
            <person name="Machado M.A."/>
            <person name="Marino C.L."/>
            <person name="Menck C.F."/>
            <person name="Nunes L.R."/>
            <person name="Oliveira R.C."/>
            <person name="Pereira G.G."/>
            <person name="Siqueira W."/>
            <person name="de Souza A.A."/>
            <person name="Tsai S.M."/>
            <person name="Zanca A.S."/>
            <person name="Simpson A.J.G."/>
            <person name="Brumbley S.M."/>
            <person name="Setubal J.C."/>
        </authorList>
    </citation>
    <scope>NUCLEOTIDE SEQUENCE [LARGE SCALE GENOMIC DNA]</scope>
    <source>
        <strain>CTCB07</strain>
    </source>
</reference>